<reference key="1">
    <citation type="journal article" date="2005" name="Nature">
        <title>The genome of the social amoeba Dictyostelium discoideum.</title>
        <authorList>
            <person name="Eichinger L."/>
            <person name="Pachebat J.A."/>
            <person name="Gloeckner G."/>
            <person name="Rajandream M.A."/>
            <person name="Sucgang R."/>
            <person name="Berriman M."/>
            <person name="Song J."/>
            <person name="Olsen R."/>
            <person name="Szafranski K."/>
            <person name="Xu Q."/>
            <person name="Tunggal B."/>
            <person name="Kummerfeld S."/>
            <person name="Madera M."/>
            <person name="Konfortov B.A."/>
            <person name="Rivero F."/>
            <person name="Bankier A.T."/>
            <person name="Lehmann R."/>
            <person name="Hamlin N."/>
            <person name="Davies R."/>
            <person name="Gaudet P."/>
            <person name="Fey P."/>
            <person name="Pilcher K."/>
            <person name="Chen G."/>
            <person name="Saunders D."/>
            <person name="Sodergren E.J."/>
            <person name="Davis P."/>
            <person name="Kerhornou A."/>
            <person name="Nie X."/>
            <person name="Hall N."/>
            <person name="Anjard C."/>
            <person name="Hemphill L."/>
            <person name="Bason N."/>
            <person name="Farbrother P."/>
            <person name="Desany B."/>
            <person name="Just E."/>
            <person name="Morio T."/>
            <person name="Rost R."/>
            <person name="Churcher C.M."/>
            <person name="Cooper J."/>
            <person name="Haydock S."/>
            <person name="van Driessche N."/>
            <person name="Cronin A."/>
            <person name="Goodhead I."/>
            <person name="Muzny D.M."/>
            <person name="Mourier T."/>
            <person name="Pain A."/>
            <person name="Lu M."/>
            <person name="Harper D."/>
            <person name="Lindsay R."/>
            <person name="Hauser H."/>
            <person name="James K.D."/>
            <person name="Quiles M."/>
            <person name="Madan Babu M."/>
            <person name="Saito T."/>
            <person name="Buchrieser C."/>
            <person name="Wardroper A."/>
            <person name="Felder M."/>
            <person name="Thangavelu M."/>
            <person name="Johnson D."/>
            <person name="Knights A."/>
            <person name="Loulseged H."/>
            <person name="Mungall K.L."/>
            <person name="Oliver K."/>
            <person name="Price C."/>
            <person name="Quail M.A."/>
            <person name="Urushihara H."/>
            <person name="Hernandez J."/>
            <person name="Rabbinowitsch E."/>
            <person name="Steffen D."/>
            <person name="Sanders M."/>
            <person name="Ma J."/>
            <person name="Kohara Y."/>
            <person name="Sharp S."/>
            <person name="Simmonds M.N."/>
            <person name="Spiegler S."/>
            <person name="Tivey A."/>
            <person name="Sugano S."/>
            <person name="White B."/>
            <person name="Walker D."/>
            <person name="Woodward J.R."/>
            <person name="Winckler T."/>
            <person name="Tanaka Y."/>
            <person name="Shaulsky G."/>
            <person name="Schleicher M."/>
            <person name="Weinstock G.M."/>
            <person name="Rosenthal A."/>
            <person name="Cox E.C."/>
            <person name="Chisholm R.L."/>
            <person name="Gibbs R.A."/>
            <person name="Loomis W.F."/>
            <person name="Platzer M."/>
            <person name="Kay R.R."/>
            <person name="Williams J.G."/>
            <person name="Dear P.H."/>
            <person name="Noegel A.A."/>
            <person name="Barrell B.G."/>
            <person name="Kuspa A."/>
        </authorList>
    </citation>
    <scope>NUCLEOTIDE SEQUENCE [LARGE SCALE GENOMIC DNA]</scope>
    <source>
        <strain>AX4</strain>
    </source>
</reference>
<comment type="subcellular location">
    <subcellularLocation>
        <location evidence="2">Secreted</location>
    </subcellularLocation>
</comment>
<feature type="signal peptide" evidence="1">
    <location>
        <begin position="1"/>
        <end position="28"/>
    </location>
</feature>
<feature type="chain" id="PRO_0000348518" description="Uncharacterized protein DDB_G0285615">
    <location>
        <begin position="29"/>
        <end position="255"/>
    </location>
</feature>
<feature type="glycosylation site" description="N-linked (GlcNAc...) asparagine" evidence="1">
    <location>
        <position position="38"/>
    </location>
</feature>
<feature type="glycosylation site" description="N-linked (GlcNAc...) asparagine" evidence="1">
    <location>
        <position position="61"/>
    </location>
</feature>
<feature type="glycosylation site" description="N-linked (GlcNAc...) asparagine" evidence="1">
    <location>
        <position position="83"/>
    </location>
</feature>
<organism>
    <name type="scientific">Dictyostelium discoideum</name>
    <name type="common">Social amoeba</name>
    <dbReference type="NCBI Taxonomy" id="44689"/>
    <lineage>
        <taxon>Eukaryota</taxon>
        <taxon>Amoebozoa</taxon>
        <taxon>Evosea</taxon>
        <taxon>Eumycetozoa</taxon>
        <taxon>Dictyostelia</taxon>
        <taxon>Dictyosteliales</taxon>
        <taxon>Dictyosteliaceae</taxon>
        <taxon>Dictyostelium</taxon>
    </lineage>
</organism>
<gene>
    <name type="ORF">DDB_G0285615</name>
</gene>
<name>Y3815_DICDI</name>
<keyword id="KW-0325">Glycoprotein</keyword>
<keyword id="KW-1185">Reference proteome</keyword>
<keyword id="KW-0964">Secreted</keyword>
<keyword id="KW-0732">Signal</keyword>
<sequence length="255" mass="28420">MFKLNFKNNYKVLTLLFSLTLSMFVSNAQVYYPGYLNNVSSISTVSADYFPLLVHNPPLTNSTTYSFNEAINLLDTVTDPIFNATQIQALLNTWASNVKAVIGLSLPIYVTQLNRINRIDLLSIQMYTETNSAFILSATTYAPLKPQGVSILNQVNAIKASLNGITLTTTQQAQLTQFNAAISKIQLSVSNSHLITFGANDVIPFNSDSLSYMEYIADDILTLDDAIDIIKQNNVRILNYIYDLYSTHKTLSLNF</sequence>
<proteinExistence type="inferred from homology"/>
<dbReference type="EMBL" id="AAFI02000079">
    <property type="protein sequence ID" value="EAL64645.1"/>
    <property type="molecule type" value="Genomic_DNA"/>
</dbReference>
<dbReference type="RefSeq" id="XP_638165.1">
    <property type="nucleotide sequence ID" value="XM_633073.1"/>
</dbReference>
<dbReference type="SMR" id="Q54MX8"/>
<dbReference type="FunCoup" id="Q54MX8">
    <property type="interactions" value="640"/>
</dbReference>
<dbReference type="GlyGen" id="Q54MX8">
    <property type="glycosylation" value="3 sites"/>
</dbReference>
<dbReference type="PaxDb" id="44689-DDB0238155"/>
<dbReference type="EnsemblProtists" id="EAL64645">
    <property type="protein sequence ID" value="EAL64645"/>
    <property type="gene ID" value="DDB_G0285615"/>
</dbReference>
<dbReference type="GeneID" id="8625213"/>
<dbReference type="KEGG" id="ddi:DDB_G0285615"/>
<dbReference type="dictyBase" id="DDB_G0285615">
    <property type="gene designation" value="iliA"/>
</dbReference>
<dbReference type="VEuPathDB" id="AmoebaDB:DDB_G0285615"/>
<dbReference type="HOGENOM" id="CLU_1091655_0_0_1"/>
<dbReference type="InParanoid" id="Q54MX8"/>
<dbReference type="PRO" id="PR:Q54MX8"/>
<dbReference type="Proteomes" id="UP000002195">
    <property type="component" value="Chromosome 4"/>
</dbReference>
<dbReference type="GO" id="GO:0005576">
    <property type="term" value="C:extracellular region"/>
    <property type="evidence" value="ECO:0007669"/>
    <property type="project" value="UniProtKB-SubCell"/>
</dbReference>
<evidence type="ECO:0000255" key="1"/>
<evidence type="ECO:0000305" key="2"/>
<accession>Q54MX8</accession>
<protein>
    <recommendedName>
        <fullName>Uncharacterized protein DDB_G0285615</fullName>
    </recommendedName>
</protein>